<sequence>MRAPPLLLLLAACAPPSGAAVDPTPPGWEPAPDAPWCPYKVLSEGPETGGGRLCFRSPVRGFRCQTPGCETLASAGGSLRAHVLRNRSVLLQWRLAPAEARRVRVFALNCSWRGTYTRFPCDRVLLGASCRDYLLPDVHDSVRYRLCLQQLPLRAEVAVVPPELAECVEFTAEPAAMQEIVVAMTAVGGSICVMLVVICLLVAYITENLMHPTFRRPSLRRQP</sequence>
<accession>A2A9Q0</accession>
<accession>Q8BXK6</accession>
<reference key="1">
    <citation type="journal article" date="2005" name="Science">
        <title>The transcriptional landscape of the mammalian genome.</title>
        <authorList>
            <person name="Carninci P."/>
            <person name="Kasukawa T."/>
            <person name="Katayama S."/>
            <person name="Gough J."/>
            <person name="Frith M.C."/>
            <person name="Maeda N."/>
            <person name="Oyama R."/>
            <person name="Ravasi T."/>
            <person name="Lenhard B."/>
            <person name="Wells C."/>
            <person name="Kodzius R."/>
            <person name="Shimokawa K."/>
            <person name="Bajic V.B."/>
            <person name="Brenner S.E."/>
            <person name="Batalov S."/>
            <person name="Forrest A.R."/>
            <person name="Zavolan M."/>
            <person name="Davis M.J."/>
            <person name="Wilming L.G."/>
            <person name="Aidinis V."/>
            <person name="Allen J.E."/>
            <person name="Ambesi-Impiombato A."/>
            <person name="Apweiler R."/>
            <person name="Aturaliya R.N."/>
            <person name="Bailey T.L."/>
            <person name="Bansal M."/>
            <person name="Baxter L."/>
            <person name="Beisel K.W."/>
            <person name="Bersano T."/>
            <person name="Bono H."/>
            <person name="Chalk A.M."/>
            <person name="Chiu K.P."/>
            <person name="Choudhary V."/>
            <person name="Christoffels A."/>
            <person name="Clutterbuck D.R."/>
            <person name="Crowe M.L."/>
            <person name="Dalla E."/>
            <person name="Dalrymple B.P."/>
            <person name="de Bono B."/>
            <person name="Della Gatta G."/>
            <person name="di Bernardo D."/>
            <person name="Down T."/>
            <person name="Engstrom P."/>
            <person name="Fagiolini M."/>
            <person name="Faulkner G."/>
            <person name="Fletcher C.F."/>
            <person name="Fukushima T."/>
            <person name="Furuno M."/>
            <person name="Futaki S."/>
            <person name="Gariboldi M."/>
            <person name="Georgii-Hemming P."/>
            <person name="Gingeras T.R."/>
            <person name="Gojobori T."/>
            <person name="Green R.E."/>
            <person name="Gustincich S."/>
            <person name="Harbers M."/>
            <person name="Hayashi Y."/>
            <person name="Hensch T.K."/>
            <person name="Hirokawa N."/>
            <person name="Hill D."/>
            <person name="Huminiecki L."/>
            <person name="Iacono M."/>
            <person name="Ikeo K."/>
            <person name="Iwama A."/>
            <person name="Ishikawa T."/>
            <person name="Jakt M."/>
            <person name="Kanapin A."/>
            <person name="Katoh M."/>
            <person name="Kawasawa Y."/>
            <person name="Kelso J."/>
            <person name="Kitamura H."/>
            <person name="Kitano H."/>
            <person name="Kollias G."/>
            <person name="Krishnan S.P."/>
            <person name="Kruger A."/>
            <person name="Kummerfeld S.K."/>
            <person name="Kurochkin I.V."/>
            <person name="Lareau L.F."/>
            <person name="Lazarevic D."/>
            <person name="Lipovich L."/>
            <person name="Liu J."/>
            <person name="Liuni S."/>
            <person name="McWilliam S."/>
            <person name="Madan Babu M."/>
            <person name="Madera M."/>
            <person name="Marchionni L."/>
            <person name="Matsuda H."/>
            <person name="Matsuzawa S."/>
            <person name="Miki H."/>
            <person name="Mignone F."/>
            <person name="Miyake S."/>
            <person name="Morris K."/>
            <person name="Mottagui-Tabar S."/>
            <person name="Mulder N."/>
            <person name="Nakano N."/>
            <person name="Nakauchi H."/>
            <person name="Ng P."/>
            <person name="Nilsson R."/>
            <person name="Nishiguchi S."/>
            <person name="Nishikawa S."/>
            <person name="Nori F."/>
            <person name="Ohara O."/>
            <person name="Okazaki Y."/>
            <person name="Orlando V."/>
            <person name="Pang K.C."/>
            <person name="Pavan W.J."/>
            <person name="Pavesi G."/>
            <person name="Pesole G."/>
            <person name="Petrovsky N."/>
            <person name="Piazza S."/>
            <person name="Reed J."/>
            <person name="Reid J.F."/>
            <person name="Ring B.Z."/>
            <person name="Ringwald M."/>
            <person name="Rost B."/>
            <person name="Ruan Y."/>
            <person name="Salzberg S.L."/>
            <person name="Sandelin A."/>
            <person name="Schneider C."/>
            <person name="Schoenbach C."/>
            <person name="Sekiguchi K."/>
            <person name="Semple C.A."/>
            <person name="Seno S."/>
            <person name="Sessa L."/>
            <person name="Sheng Y."/>
            <person name="Shibata Y."/>
            <person name="Shimada H."/>
            <person name="Shimada K."/>
            <person name="Silva D."/>
            <person name="Sinclair B."/>
            <person name="Sperling S."/>
            <person name="Stupka E."/>
            <person name="Sugiura K."/>
            <person name="Sultana R."/>
            <person name="Takenaka Y."/>
            <person name="Taki K."/>
            <person name="Tammoja K."/>
            <person name="Tan S.L."/>
            <person name="Tang S."/>
            <person name="Taylor M.S."/>
            <person name="Tegner J."/>
            <person name="Teichmann S.A."/>
            <person name="Ueda H.R."/>
            <person name="van Nimwegen E."/>
            <person name="Verardo R."/>
            <person name="Wei C.L."/>
            <person name="Yagi K."/>
            <person name="Yamanishi H."/>
            <person name="Zabarovsky E."/>
            <person name="Zhu S."/>
            <person name="Zimmer A."/>
            <person name="Hide W."/>
            <person name="Bult C."/>
            <person name="Grimmond S.M."/>
            <person name="Teasdale R.D."/>
            <person name="Liu E.T."/>
            <person name="Brusic V."/>
            <person name="Quackenbush J."/>
            <person name="Wahlestedt C."/>
            <person name="Mattick J.S."/>
            <person name="Hume D.A."/>
            <person name="Kai C."/>
            <person name="Sasaki D."/>
            <person name="Tomaru Y."/>
            <person name="Fukuda S."/>
            <person name="Kanamori-Katayama M."/>
            <person name="Suzuki M."/>
            <person name="Aoki J."/>
            <person name="Arakawa T."/>
            <person name="Iida J."/>
            <person name="Imamura K."/>
            <person name="Itoh M."/>
            <person name="Kato T."/>
            <person name="Kawaji H."/>
            <person name="Kawagashira N."/>
            <person name="Kawashima T."/>
            <person name="Kojima M."/>
            <person name="Kondo S."/>
            <person name="Konno H."/>
            <person name="Nakano K."/>
            <person name="Ninomiya N."/>
            <person name="Nishio T."/>
            <person name="Okada M."/>
            <person name="Plessy C."/>
            <person name="Shibata K."/>
            <person name="Shiraki T."/>
            <person name="Suzuki S."/>
            <person name="Tagami M."/>
            <person name="Waki K."/>
            <person name="Watahiki A."/>
            <person name="Okamura-Oho Y."/>
            <person name="Suzuki H."/>
            <person name="Kawai J."/>
            <person name="Hayashizaki Y."/>
        </authorList>
    </citation>
    <scope>NUCLEOTIDE SEQUENCE [LARGE SCALE MRNA]</scope>
    <source>
        <strain>C57BL/6J</strain>
        <tissue>Adrenal gland</tissue>
    </source>
</reference>
<reference key="2">
    <citation type="journal article" date="2009" name="PLoS Biol.">
        <title>Lineage-specific biology revealed by a finished genome assembly of the mouse.</title>
        <authorList>
            <person name="Church D.M."/>
            <person name="Goodstadt L."/>
            <person name="Hillier L.W."/>
            <person name="Zody M.C."/>
            <person name="Goldstein S."/>
            <person name="She X."/>
            <person name="Bult C.J."/>
            <person name="Agarwala R."/>
            <person name="Cherry J.L."/>
            <person name="DiCuccio M."/>
            <person name="Hlavina W."/>
            <person name="Kapustin Y."/>
            <person name="Meric P."/>
            <person name="Maglott D."/>
            <person name="Birtle Z."/>
            <person name="Marques A.C."/>
            <person name="Graves T."/>
            <person name="Zhou S."/>
            <person name="Teague B."/>
            <person name="Potamousis K."/>
            <person name="Churas C."/>
            <person name="Place M."/>
            <person name="Herschleb J."/>
            <person name="Runnheim R."/>
            <person name="Forrest D."/>
            <person name="Amos-Landgraf J."/>
            <person name="Schwartz D.C."/>
            <person name="Cheng Z."/>
            <person name="Lindblad-Toh K."/>
            <person name="Eichler E.E."/>
            <person name="Ponting C.P."/>
        </authorList>
    </citation>
    <scope>NUCLEOTIDE SEQUENCE [LARGE SCALE GENOMIC DNA]</scope>
    <source>
        <strain>C57BL/6J</strain>
    </source>
</reference>
<name>FND10_MOUSE</name>
<gene>
    <name type="primary">Fndc10</name>
</gene>
<keyword id="KW-0325">Glycoprotein</keyword>
<keyword id="KW-0472">Membrane</keyword>
<keyword id="KW-1185">Reference proteome</keyword>
<keyword id="KW-0732">Signal</keyword>
<keyword id="KW-0812">Transmembrane</keyword>
<keyword id="KW-1133">Transmembrane helix</keyword>
<organism>
    <name type="scientific">Mus musculus</name>
    <name type="common">Mouse</name>
    <dbReference type="NCBI Taxonomy" id="10090"/>
    <lineage>
        <taxon>Eukaryota</taxon>
        <taxon>Metazoa</taxon>
        <taxon>Chordata</taxon>
        <taxon>Craniata</taxon>
        <taxon>Vertebrata</taxon>
        <taxon>Euteleostomi</taxon>
        <taxon>Mammalia</taxon>
        <taxon>Eutheria</taxon>
        <taxon>Euarchontoglires</taxon>
        <taxon>Glires</taxon>
        <taxon>Rodentia</taxon>
        <taxon>Myomorpha</taxon>
        <taxon>Muroidea</taxon>
        <taxon>Muridae</taxon>
        <taxon>Murinae</taxon>
        <taxon>Mus</taxon>
        <taxon>Mus</taxon>
    </lineage>
</organism>
<protein>
    <recommendedName>
        <fullName>Fibronectin type III domain-containing protein 10</fullName>
    </recommendedName>
</protein>
<evidence type="ECO:0000255" key="1"/>
<evidence type="ECO:0000305" key="2"/>
<feature type="signal peptide" evidence="1">
    <location>
        <begin position="1"/>
        <end position="19"/>
    </location>
</feature>
<feature type="chain" id="PRO_0000416239" description="Fibronectin type III domain-containing protein 10">
    <location>
        <begin position="20"/>
        <end position="223"/>
    </location>
</feature>
<feature type="topological domain" description="Extracellular" evidence="1">
    <location>
        <begin position="20"/>
        <end position="179"/>
    </location>
</feature>
<feature type="transmembrane region" description="Helical" evidence="1">
    <location>
        <begin position="180"/>
        <end position="200"/>
    </location>
</feature>
<feature type="topological domain" description="Cytoplasmic" evidence="1">
    <location>
        <begin position="201"/>
        <end position="223"/>
    </location>
</feature>
<feature type="domain" description="Fibronectin type-III">
    <location>
        <begin position="72"/>
        <end position="168"/>
    </location>
</feature>
<feature type="glycosylation site" description="N-linked (GlcNAc...) asparagine" evidence="1">
    <location>
        <position position="86"/>
    </location>
</feature>
<feature type="glycosylation site" description="N-linked (GlcNAc...) asparagine" evidence="1">
    <location>
        <position position="109"/>
    </location>
</feature>
<proteinExistence type="evidence at transcript level"/>
<comment type="subcellular location">
    <subcellularLocation>
        <location evidence="2">Membrane</location>
        <topology evidence="2">Single-pass type I membrane protein</topology>
    </subcellularLocation>
</comment>
<comment type="sequence caution" evidence="2">
    <conflict type="frameshift">
        <sequence resource="EMBL-CDS" id="BAC32775"/>
    </conflict>
</comment>
<dbReference type="EMBL" id="AK046537">
    <property type="protein sequence ID" value="BAC32775.1"/>
    <property type="status" value="ALT_FRAME"/>
    <property type="molecule type" value="mRNA"/>
</dbReference>
<dbReference type="EMBL" id="AL627405">
    <property type="status" value="NOT_ANNOTATED_CDS"/>
    <property type="molecule type" value="Genomic_DNA"/>
</dbReference>
<dbReference type="EMBL" id="AL670236">
    <property type="status" value="NOT_ANNOTATED_CDS"/>
    <property type="molecule type" value="Genomic_DNA"/>
</dbReference>
<dbReference type="CCDS" id="CCDS57321.1"/>
<dbReference type="RefSeq" id="NP_848814.3">
    <property type="nucleotide sequence ID" value="NM_178699.5"/>
</dbReference>
<dbReference type="RefSeq" id="XP_030109373.1">
    <property type="nucleotide sequence ID" value="XM_030253513.1"/>
</dbReference>
<dbReference type="SMR" id="A2A9Q0"/>
<dbReference type="STRING" id="10090.ENSMUSP00000096871"/>
<dbReference type="GlyCosmos" id="A2A9Q0">
    <property type="glycosylation" value="2 sites, No reported glycans"/>
</dbReference>
<dbReference type="GlyGen" id="A2A9Q0">
    <property type="glycosylation" value="3 sites, 1 N-linked glycan (1 site)"/>
</dbReference>
<dbReference type="PhosphoSitePlus" id="A2A9Q0"/>
<dbReference type="PaxDb" id="10090-ENSMUSP00000096871"/>
<dbReference type="PeptideAtlas" id="A2A9Q0"/>
<dbReference type="ProteomicsDB" id="271786"/>
<dbReference type="DNASU" id="230991"/>
<dbReference type="Ensembl" id="ENSMUST00000099265.3">
    <property type="protein sequence ID" value="ENSMUSP00000096871.3"/>
    <property type="gene ID" value="ENSMUSG00000074738.3"/>
</dbReference>
<dbReference type="GeneID" id="230991"/>
<dbReference type="KEGG" id="mmu:230991"/>
<dbReference type="UCSC" id="uc008wei.2">
    <property type="organism name" value="mouse"/>
</dbReference>
<dbReference type="AGR" id="MGI:2444790"/>
<dbReference type="CTD" id="643988"/>
<dbReference type="MGI" id="MGI:2444790">
    <property type="gene designation" value="Fndc10"/>
</dbReference>
<dbReference type="VEuPathDB" id="HostDB:ENSMUSG00000074738"/>
<dbReference type="eggNOG" id="ENOG502S019">
    <property type="taxonomic scope" value="Eukaryota"/>
</dbReference>
<dbReference type="GeneTree" id="ENSGT00550000076432"/>
<dbReference type="HOGENOM" id="CLU_097198_0_0_1"/>
<dbReference type="InParanoid" id="A2A9Q0"/>
<dbReference type="OMA" id="YTRFPCD"/>
<dbReference type="OrthoDB" id="9450734at2759"/>
<dbReference type="TreeFam" id="TF332961"/>
<dbReference type="BioGRID-ORCS" id="230991">
    <property type="hits" value="2 hits in 77 CRISPR screens"/>
</dbReference>
<dbReference type="ChiTaRS" id="Fndc10">
    <property type="organism name" value="mouse"/>
</dbReference>
<dbReference type="PRO" id="PR:A2A9Q0"/>
<dbReference type="Proteomes" id="UP000000589">
    <property type="component" value="Chromosome 4"/>
</dbReference>
<dbReference type="RNAct" id="A2A9Q0">
    <property type="molecule type" value="protein"/>
</dbReference>
<dbReference type="Bgee" id="ENSMUSG00000074738">
    <property type="expression patterns" value="Expressed in external carotid artery and 227 other cell types or tissues"/>
</dbReference>
<dbReference type="GO" id="GO:0016020">
    <property type="term" value="C:membrane"/>
    <property type="evidence" value="ECO:0007669"/>
    <property type="project" value="UniProtKB-SubCell"/>
</dbReference>
<dbReference type="InterPro" id="IPR034446">
    <property type="entry name" value="Fndc10"/>
</dbReference>
<dbReference type="PANTHER" id="PTHR39233">
    <property type="entry name" value="FIBRONECTIN TYPE III DOMAIN-CONTAINING PROTEIN 10"/>
    <property type="match status" value="1"/>
</dbReference>
<dbReference type="PANTHER" id="PTHR39233:SF1">
    <property type="entry name" value="FIBRONECTIN TYPE III DOMAIN-CONTAINING PROTEIN 10"/>
    <property type="match status" value="1"/>
</dbReference>
<dbReference type="Pfam" id="PF17742">
    <property type="entry name" value="Fndc10"/>
    <property type="match status" value="1"/>
</dbReference>